<comment type="function">
    <text evidence="2">May play a regulatory role under conditions of derepressed gsp gene expression.</text>
</comment>
<comment type="subcellular location">
    <subcellularLocation>
        <location evidence="3">Cell membrane</location>
        <topology evidence="3">Single-pass membrane protein</topology>
    </subcellularLocation>
</comment>
<comment type="induction">
    <text evidence="2">Silenced by the DNA-binding protein H-NS under standard growth conditions.</text>
</comment>
<comment type="miscellaneous">
    <text>Part of a cryptic operon that encodes proteins involved in type II secretion machinery in other organisms, but is not expressed in strain K12.</text>
</comment>
<comment type="similarity">
    <text evidence="3">Belongs to the ExeA family.</text>
</comment>
<keyword id="KW-0067">ATP-binding</keyword>
<keyword id="KW-1003">Cell membrane</keyword>
<keyword id="KW-0472">Membrane</keyword>
<keyword id="KW-0547">Nucleotide-binding</keyword>
<keyword id="KW-1185">Reference proteome</keyword>
<keyword id="KW-0812">Transmembrane</keyword>
<keyword id="KW-1133">Transmembrane helix</keyword>
<keyword id="KW-0813">Transport</keyword>
<proteinExistence type="evidence at transcript level"/>
<gene>
    <name type="primary">gspA</name>
    <name type="synonym">yheD</name>
    <name type="ordered locus">b3323</name>
    <name type="ordered locus">JW3285</name>
</gene>
<name>GSPA_ECOLI</name>
<sequence length="489" mass="55298">MSTRREVILSWLCEKRQTWRLCYLLGEAGSGKTWLAQQLQKDKHRRVITLSLVVSWQGKAAWIVTDDNAAEQGCRDSAWTRDEMAGQLLHALHRTDSRCPLIIIENAHLNHRRILDDLQRAISLIPDGQFLLIGRPDRKVERDFKKQGIELVSIGRLTEHELKASILEGQNIDQPDLLLTARVLKRIALLCRGDRRKLALAGETIRLLQQAEQTSVFTAKQWRMIYRILGDNRPRKMQLAVVMSGTIIALTCGWLLLSSFTATLPVPAWLIPVTPVVKQDMTKDIAHVVMRDSEALSVLYGVWGYEVPADSAWCDQAVRAGLACKSGNASLQTLVDQNLPWIASLKVGDKKLPVVVVRVGEASVDVLVGQQTWTLTHKWFESVWTGDYLLLWKMSPEGESTITRDSSEEEILWLETMLNRALHISTEPSAEWRPLLVEKIKQFQKSHHLKTDGVVGFSTLVHLWQVAGESAYLYRDEANISPETTVKGK</sequence>
<organism>
    <name type="scientific">Escherichia coli (strain K12)</name>
    <dbReference type="NCBI Taxonomy" id="83333"/>
    <lineage>
        <taxon>Bacteria</taxon>
        <taxon>Pseudomonadati</taxon>
        <taxon>Pseudomonadota</taxon>
        <taxon>Gammaproteobacteria</taxon>
        <taxon>Enterobacterales</taxon>
        <taxon>Enterobacteriaceae</taxon>
        <taxon>Escherichia</taxon>
    </lineage>
</organism>
<dbReference type="EMBL" id="U18997">
    <property type="protein sequence ID" value="AAA58120.1"/>
    <property type="molecule type" value="Genomic_DNA"/>
</dbReference>
<dbReference type="EMBL" id="U00096">
    <property type="protein sequence ID" value="AAC76348.1"/>
    <property type="molecule type" value="Genomic_DNA"/>
</dbReference>
<dbReference type="EMBL" id="AP009048">
    <property type="protein sequence ID" value="BAE77968.1"/>
    <property type="molecule type" value="Genomic_DNA"/>
</dbReference>
<dbReference type="PIR" id="F65125">
    <property type="entry name" value="F65125"/>
</dbReference>
<dbReference type="RefSeq" id="NP_417782.1">
    <property type="nucleotide sequence ID" value="NC_000913.3"/>
</dbReference>
<dbReference type="RefSeq" id="WP_000107576.1">
    <property type="nucleotide sequence ID" value="NZ_STEB01000038.1"/>
</dbReference>
<dbReference type="SMR" id="P45756"/>
<dbReference type="BioGRID" id="4261295">
    <property type="interactions" value="260"/>
</dbReference>
<dbReference type="FunCoup" id="P45756">
    <property type="interactions" value="69"/>
</dbReference>
<dbReference type="IntAct" id="P45756">
    <property type="interactions" value="1"/>
</dbReference>
<dbReference type="STRING" id="511145.b3323"/>
<dbReference type="TCDB" id="9.B.42.1.3">
    <property type="family name" value="the exeab (exeab) secretin assembly/export complex family"/>
</dbReference>
<dbReference type="PaxDb" id="511145-b3323"/>
<dbReference type="EnsemblBacteria" id="AAC76348">
    <property type="protein sequence ID" value="AAC76348"/>
    <property type="gene ID" value="b3323"/>
</dbReference>
<dbReference type="GeneID" id="947825"/>
<dbReference type="KEGG" id="ecj:JW3285"/>
<dbReference type="KEGG" id="eco:b3323"/>
<dbReference type="KEGG" id="ecoc:C3026_18055"/>
<dbReference type="PATRIC" id="fig|1411691.4.peg.3408"/>
<dbReference type="EchoBASE" id="EB2725"/>
<dbReference type="eggNOG" id="COG3267">
    <property type="taxonomic scope" value="Bacteria"/>
</dbReference>
<dbReference type="eggNOG" id="COG3409">
    <property type="taxonomic scope" value="Bacteria"/>
</dbReference>
<dbReference type="HOGENOM" id="CLU_044050_0_0_6"/>
<dbReference type="InParanoid" id="P45756"/>
<dbReference type="OMA" id="WFTRHFS"/>
<dbReference type="OrthoDB" id="9780149at2"/>
<dbReference type="BioCyc" id="EcoCyc:G7701-MONOMER"/>
<dbReference type="PRO" id="PR:P45756"/>
<dbReference type="Proteomes" id="UP000000625">
    <property type="component" value="Chromosome"/>
</dbReference>
<dbReference type="GO" id="GO:0005829">
    <property type="term" value="C:cytosol"/>
    <property type="evidence" value="ECO:0000314"/>
    <property type="project" value="EcoCyc"/>
</dbReference>
<dbReference type="GO" id="GO:0005886">
    <property type="term" value="C:plasma membrane"/>
    <property type="evidence" value="ECO:0007669"/>
    <property type="project" value="UniProtKB-SubCell"/>
</dbReference>
<dbReference type="GO" id="GO:0005524">
    <property type="term" value="F:ATP binding"/>
    <property type="evidence" value="ECO:0007669"/>
    <property type="project" value="UniProtKB-KW"/>
</dbReference>
<dbReference type="GO" id="GO:0016887">
    <property type="term" value="F:ATP hydrolysis activity"/>
    <property type="evidence" value="ECO:0007669"/>
    <property type="project" value="InterPro"/>
</dbReference>
<dbReference type="FunFam" id="3.90.70.10:FF:000107">
    <property type="entry name" value="General secretion pathway protein A"/>
    <property type="match status" value="1"/>
</dbReference>
<dbReference type="Gene3D" id="3.90.70.10">
    <property type="entry name" value="Cysteine proteinases"/>
    <property type="match status" value="1"/>
</dbReference>
<dbReference type="Gene3D" id="1.10.101.10">
    <property type="entry name" value="PGBD-like superfamily/PGBD"/>
    <property type="match status" value="1"/>
</dbReference>
<dbReference type="InterPro" id="IPR049945">
    <property type="entry name" value="AAA_22"/>
</dbReference>
<dbReference type="InterPro" id="IPR052026">
    <property type="entry name" value="ExeA_AAA_ATPase_DNA-bind"/>
</dbReference>
<dbReference type="InterPro" id="IPR048809">
    <property type="entry name" value="GspA_C39-like"/>
</dbReference>
<dbReference type="InterPro" id="IPR027417">
    <property type="entry name" value="P-loop_NTPase"/>
</dbReference>
<dbReference type="InterPro" id="IPR002477">
    <property type="entry name" value="Peptidoglycan-bd-like"/>
</dbReference>
<dbReference type="InterPro" id="IPR036365">
    <property type="entry name" value="PGBD-like_sf"/>
</dbReference>
<dbReference type="InterPro" id="IPR036366">
    <property type="entry name" value="PGBDSf"/>
</dbReference>
<dbReference type="PANTHER" id="PTHR35894">
    <property type="entry name" value="GENERAL SECRETION PATHWAY PROTEIN A-RELATED"/>
    <property type="match status" value="1"/>
</dbReference>
<dbReference type="PANTHER" id="PTHR35894:SF7">
    <property type="entry name" value="GENERAL SECRETION PATHWAY PROTEIN A-RELATED"/>
    <property type="match status" value="1"/>
</dbReference>
<dbReference type="Pfam" id="PF13401">
    <property type="entry name" value="AAA_22"/>
    <property type="match status" value="1"/>
</dbReference>
<dbReference type="Pfam" id="PF21327">
    <property type="entry name" value="GspA_C39-like"/>
    <property type="match status" value="1"/>
</dbReference>
<dbReference type="Pfam" id="PF01471">
    <property type="entry name" value="PG_binding_1"/>
    <property type="match status" value="1"/>
</dbReference>
<dbReference type="SUPFAM" id="SSF52540">
    <property type="entry name" value="P-loop containing nucleoside triphosphate hydrolases"/>
    <property type="match status" value="1"/>
</dbReference>
<dbReference type="SUPFAM" id="SSF47090">
    <property type="entry name" value="PGBD-like"/>
    <property type="match status" value="1"/>
</dbReference>
<accession>P45756</accession>
<accession>Q2M6Y8</accession>
<protein>
    <recommendedName>
        <fullName>Putative general secretion pathway protein A</fullName>
    </recommendedName>
</protein>
<evidence type="ECO:0000255" key="1"/>
<evidence type="ECO:0000269" key="2">
    <source>
    </source>
</evidence>
<evidence type="ECO:0000305" key="3"/>
<reference key="1">
    <citation type="journal article" date="1997" name="Science">
        <title>The complete genome sequence of Escherichia coli K-12.</title>
        <authorList>
            <person name="Blattner F.R."/>
            <person name="Plunkett G. III"/>
            <person name="Bloch C.A."/>
            <person name="Perna N.T."/>
            <person name="Burland V."/>
            <person name="Riley M."/>
            <person name="Collado-Vides J."/>
            <person name="Glasner J.D."/>
            <person name="Rode C.K."/>
            <person name="Mayhew G.F."/>
            <person name="Gregor J."/>
            <person name="Davis N.W."/>
            <person name="Kirkpatrick H.A."/>
            <person name="Goeden M.A."/>
            <person name="Rose D.J."/>
            <person name="Mau B."/>
            <person name="Shao Y."/>
        </authorList>
    </citation>
    <scope>NUCLEOTIDE SEQUENCE [LARGE SCALE GENOMIC DNA]</scope>
    <source>
        <strain>K12 / MG1655 / ATCC 47076</strain>
    </source>
</reference>
<reference key="2">
    <citation type="journal article" date="2006" name="Mol. Syst. Biol.">
        <title>Highly accurate genome sequences of Escherichia coli K-12 strains MG1655 and W3110.</title>
        <authorList>
            <person name="Hayashi K."/>
            <person name="Morooka N."/>
            <person name="Yamamoto Y."/>
            <person name="Fujita K."/>
            <person name="Isono K."/>
            <person name="Choi S."/>
            <person name="Ohtsubo E."/>
            <person name="Baba T."/>
            <person name="Wanner B.L."/>
            <person name="Mori H."/>
            <person name="Horiuchi T."/>
        </authorList>
    </citation>
    <scope>NUCLEOTIDE SEQUENCE [LARGE SCALE GENOMIC DNA]</scope>
    <source>
        <strain>K12 / W3110 / ATCC 27325 / DSM 5911</strain>
    </source>
</reference>
<reference key="3">
    <citation type="journal article" date="1996" name="J. Bacteriol.">
        <title>The cryptic general secretory pathway (gsp) operon of Escherichia coli K-12 encodes functional proteins.</title>
        <authorList>
            <person name="Francetic O."/>
            <person name="Pugsley A.P."/>
        </authorList>
    </citation>
    <scope>LACK OF EXPRESSION</scope>
    <source>
        <strain>K12 / MC4100 / ATCC 35695 / DSM 6574</strain>
    </source>
</reference>
<reference key="4">
    <citation type="journal article" date="2000" name="EMBO J.">
        <title>Expression of the endogenous type II secretion pathway in Escherichia coli leads to chitinase secretion.</title>
        <authorList>
            <person name="Francetic O."/>
            <person name="Belin D."/>
            <person name="Badaut C."/>
            <person name="Pugsley A.P."/>
        </authorList>
    </citation>
    <scope>LACK OF EXPRESSION</scope>
    <scope>FUNCTION</scope>
    <scope>TRANSCRIPTIONAL REGULATION</scope>
    <source>
        <strain>K12 / MC4100 / ATCC 35695 / DSM 6574</strain>
    </source>
</reference>
<feature type="chain" id="PRO_0000214994" description="Putative general secretion pathway protein A">
    <location>
        <begin position="1"/>
        <end position="489"/>
    </location>
</feature>
<feature type="transmembrane region" description="Helical" evidence="1">
    <location>
        <begin position="237"/>
        <end position="257"/>
    </location>
</feature>
<feature type="binding site" evidence="1">
    <location>
        <begin position="26"/>
        <end position="33"/>
    </location>
    <ligand>
        <name>ATP</name>
        <dbReference type="ChEBI" id="CHEBI:30616"/>
    </ligand>
</feature>